<name>PPDK_FLAPR</name>
<comment type="function">
    <text>Formation of phosphoenolpyruvate.</text>
</comment>
<comment type="catalytic activity">
    <reaction>
        <text>pyruvate + phosphate + ATP = phosphoenolpyruvate + AMP + diphosphate + H(+)</text>
        <dbReference type="Rhea" id="RHEA:10756"/>
        <dbReference type="ChEBI" id="CHEBI:15361"/>
        <dbReference type="ChEBI" id="CHEBI:15378"/>
        <dbReference type="ChEBI" id="CHEBI:30616"/>
        <dbReference type="ChEBI" id="CHEBI:33019"/>
        <dbReference type="ChEBI" id="CHEBI:43474"/>
        <dbReference type="ChEBI" id="CHEBI:58702"/>
        <dbReference type="ChEBI" id="CHEBI:456215"/>
        <dbReference type="EC" id="2.7.9.1"/>
    </reaction>
</comment>
<comment type="cofactor">
    <cofactor evidence="2">
        <name>Mg(2+)</name>
        <dbReference type="ChEBI" id="CHEBI:18420"/>
    </cofactor>
</comment>
<comment type="activity regulation">
    <text evidence="3">Activated by light-induced dephosphorylation. Inhibited by dark-induced phosphorylation. Both reactions are catalyzed by PDRP1.</text>
</comment>
<comment type="subunit">
    <text evidence="1">Homotetramer.</text>
</comment>
<comment type="subcellular location">
    <subcellularLocation>
        <location>Plastid</location>
        <location>Chloroplast</location>
    </subcellularLocation>
</comment>
<comment type="domain">
    <text evidence="1">The N-terminal domain contains the ATP/Pi binding site, the central domain the pyrophosphate/phosphate carrier histidine, and the C-terminal domain the pyruvate binding site.</text>
</comment>
<comment type="PTM">
    <text evidence="3">Phosphorylation of Thr-536 in the dark inactivates the enzyme. Dephosphorylation upon light stimulation reactivates the enzyme.</text>
</comment>
<comment type="miscellaneous">
    <text evidence="1">The reaction takes place in three steps, mediated by a phosphocarrier histidine residue located on the surface of the central domain. The two first partial reactions are catalyzed at an active site located on the N-terminal domain, and the third partial reaction is catalyzed at an active site located on the C-terminal domain. For catalytic turnover, the central domain swivels from the concave surface of the N-terminal domain to that of the C-terminal domain (By similarity).</text>
</comment>
<comment type="miscellaneous">
    <text evidence="1">A short cytoplasmic isoform may be produced by alternative promoter usage.</text>
</comment>
<comment type="similarity">
    <text evidence="4">Belongs to the PEP-utilizing enzyme family.</text>
</comment>
<proteinExistence type="evidence at protein level"/>
<keyword id="KW-0002">3D-structure</keyword>
<keyword id="KW-0067">ATP-binding</keyword>
<keyword id="KW-0150">Chloroplast</keyword>
<keyword id="KW-0418">Kinase</keyword>
<keyword id="KW-0460">Magnesium</keyword>
<keyword id="KW-0479">Metal-binding</keyword>
<keyword id="KW-0547">Nucleotide-binding</keyword>
<keyword id="KW-0597">Phosphoprotein</keyword>
<keyword id="KW-0602">Photosynthesis</keyword>
<keyword id="KW-0934">Plastid</keyword>
<keyword id="KW-0808">Transferase</keyword>
<keyword id="KW-0809">Transit peptide</keyword>
<gene>
    <name type="primary">PPDK</name>
    <name type="synonym">PDK</name>
</gene>
<evidence type="ECO:0000250" key="1"/>
<evidence type="ECO:0000250" key="2">
    <source>
        <dbReference type="UniProtKB" id="P11155"/>
    </source>
</evidence>
<evidence type="ECO:0000269" key="3">
    <source>
    </source>
</evidence>
<evidence type="ECO:0000305" key="4"/>
<evidence type="ECO:0007829" key="5">
    <source>
        <dbReference type="PDB" id="5JVN"/>
    </source>
</evidence>
<reference key="1">
    <citation type="journal article" date="1994" name="Plant Mol. Biol.">
        <title>Primary structure of the photosynthetic pyruvate orthophosphate dikinase of the C3 plant Flaveria pringlei and expression analysis of pyruvate orthophosphate dikinase sequences in C3, C3-C4 and C4 Flaveria species.</title>
        <authorList>
            <person name="Rosche E."/>
            <person name="Streubel M."/>
            <person name="Westhoff P."/>
        </authorList>
    </citation>
    <scope>NUCLEOTIDE SEQUENCE [MRNA]</scope>
    <source>
        <tissue>Leaf</tissue>
    </source>
</reference>
<reference key="2">
    <citation type="journal article" date="2002" name="Plant Physiol.">
        <title>Pyruvate,orthophosphate dikinase in leaves and chloroplasts of C(3) plants undergoes light-/dark-induced reversible phosphorylation.</title>
        <authorList>
            <person name="Chastain C.J."/>
            <person name="Fries J.P."/>
            <person name="Vogel J.A."/>
            <person name="Randklev C.L."/>
            <person name="Vossen A.P."/>
            <person name="Dittmer S.K."/>
            <person name="Watkins E.E."/>
            <person name="Fiedler L.J."/>
            <person name="Wacker S.A."/>
            <person name="Meinhover K.C."/>
            <person name="Sarath G."/>
            <person name="Chollet R."/>
        </authorList>
    </citation>
    <scope>PHOSPHORYLATION</scope>
    <scope>ACTIVITY REGULATION</scope>
</reference>
<sequence>MMSSLFVEGMLLKSADESCLPAKGKQRRTGDLRRLNHHRQPAFVRWICRRKLSGVSRIEFHSGGLTPPRAVLNPVSPPVTTTKKRVFTFGKGRSEGNKDMKSLLGGKGANLAEMASIGLSVPPGLTISTEACEEYQQNGKKLPPGLWDEILEGLRYVQKEMSASLGDPSKPLLLSVRSGAAISMPGMMDTVLNLGLNDEVVAGLAGKSGARFAYDSYRRFLDMFGNVVMGIPHSLFDEKLEEMKAEKGVHLDTDLTAADLKDLVEQYKNVYVEAKGEKFPTDPKKQLELAVNAVFDSWDSPRANKYRSINQITGLKGTAVNIQCMVFGNMGNTSGTGVLFTRNPSTGEKKLYGEFLVNAQGEDVVAGIRTPEDLATMETCMPEAYRELVENCKILERHYKDMMDIEFTVQENRLWMLQCRTGKRTGKGAVRIAVDMVNEGLIDTRTAIKRVETQHLDQLLHPQFENPSAYKSHVVATGLPASPGAAVGQVVFSAEDAETWHAQGKSAILVRTETSPEDVGGMHAAAGILTARGGMTSHAAVVARGWGKCCVSGCADIRVNDDMKVLTIGDRVIKEGDWLSLNGSTGEVILGKQLLAPPAMSNDLETFMSWADQVRRLKVMANADTPNDALTARNNGAQGIGLCRTEHMFFASDERIKAVRKMIMAVTPEQRKAALDLLLPYQRSDFEGIFRAMDGLPVTIRLLDPPLHEFLPEGDLEHIVNELAVDTGMSEDEIYSKIEKLSEVNPMLGFRGCRLGISYPELTEMQVRAIFQAAVSMNNQGVTVIPEIMVPLVGTPQELRHQIGVIRGVAANVFAEMGLTMDYKVGTMIEIPRAALIAEEIAKEAEFFSFGTNDLTQMTFGYSRDDVGKFLQIYLSQGILQHDPFEVLDQKGVGQLIKMATEKGRAANPNLKVGICGEHGGEPSSVAFFDGVGLDYVSCSPFRVPIARLAAAQVVV</sequence>
<protein>
    <recommendedName>
        <fullName>Pyruvate, phosphate dikinase, chloroplastic</fullName>
        <ecNumber evidence="2">2.7.9.1</ecNumber>
    </recommendedName>
    <alternativeName>
        <fullName>Pyruvate, orthophosphate dikinase</fullName>
    </alternativeName>
</protein>
<dbReference type="EC" id="2.7.9.1" evidence="2"/>
<dbReference type="EMBL" id="X75516">
    <property type="protein sequence ID" value="CAA53223.1"/>
    <property type="molecule type" value="mRNA"/>
</dbReference>
<dbReference type="PIR" id="S53297">
    <property type="entry name" value="S53297"/>
</dbReference>
<dbReference type="PDB" id="5JVN">
    <property type="method" value="X-ray"/>
    <property type="resolution" value="2.90 A"/>
    <property type="chains" value="A=83-956"/>
</dbReference>
<dbReference type="PDBsum" id="5JVN"/>
<dbReference type="SMR" id="Q42736"/>
<dbReference type="BRENDA" id="2.7.9.1">
    <property type="organism ID" value="2269"/>
</dbReference>
<dbReference type="GO" id="GO:0009507">
    <property type="term" value="C:chloroplast"/>
    <property type="evidence" value="ECO:0007669"/>
    <property type="project" value="UniProtKB-SubCell"/>
</dbReference>
<dbReference type="GO" id="GO:0005524">
    <property type="term" value="F:ATP binding"/>
    <property type="evidence" value="ECO:0007669"/>
    <property type="project" value="UniProtKB-KW"/>
</dbReference>
<dbReference type="GO" id="GO:0016301">
    <property type="term" value="F:kinase activity"/>
    <property type="evidence" value="ECO:0007669"/>
    <property type="project" value="UniProtKB-KW"/>
</dbReference>
<dbReference type="GO" id="GO:0046872">
    <property type="term" value="F:metal ion binding"/>
    <property type="evidence" value="ECO:0007669"/>
    <property type="project" value="UniProtKB-KW"/>
</dbReference>
<dbReference type="GO" id="GO:0050242">
    <property type="term" value="F:pyruvate, phosphate dikinase activity"/>
    <property type="evidence" value="ECO:0007669"/>
    <property type="project" value="UniProtKB-EC"/>
</dbReference>
<dbReference type="GO" id="GO:0015979">
    <property type="term" value="P:photosynthesis"/>
    <property type="evidence" value="ECO:0007669"/>
    <property type="project" value="UniProtKB-KW"/>
</dbReference>
<dbReference type="FunFam" id="3.20.20.60:FF:000040">
    <property type="entry name" value="Pyruvate, phosphate dikinase, chloroplastic"/>
    <property type="match status" value="1"/>
</dbReference>
<dbReference type="FunFam" id="3.30.470.20:FF:000038">
    <property type="entry name" value="Pyruvate, phosphate dikinase, chloroplastic"/>
    <property type="match status" value="1"/>
</dbReference>
<dbReference type="FunFam" id="3.50.30.10:FF:000009">
    <property type="entry name" value="Pyruvate, phosphate dikinase, chloroplastic"/>
    <property type="match status" value="1"/>
</dbReference>
<dbReference type="Gene3D" id="1.20.80.30">
    <property type="match status" value="1"/>
</dbReference>
<dbReference type="Gene3D" id="3.30.1490.20">
    <property type="entry name" value="ATP-grasp fold, A domain"/>
    <property type="match status" value="1"/>
</dbReference>
<dbReference type="Gene3D" id="3.30.470.20">
    <property type="entry name" value="ATP-grasp fold, B domain"/>
    <property type="match status" value="1"/>
</dbReference>
<dbReference type="Gene3D" id="3.20.20.60">
    <property type="entry name" value="Phosphoenolpyruvate-binding domains"/>
    <property type="match status" value="1"/>
</dbReference>
<dbReference type="Gene3D" id="3.50.30.10">
    <property type="entry name" value="Phosphohistidine domain"/>
    <property type="match status" value="1"/>
</dbReference>
<dbReference type="Gene3D" id="1.10.189.10">
    <property type="entry name" value="Pyruvate Phosphate Dikinase, domain 2"/>
    <property type="match status" value="1"/>
</dbReference>
<dbReference type="InterPro" id="IPR013815">
    <property type="entry name" value="ATP_grasp_subdomain_1"/>
</dbReference>
<dbReference type="InterPro" id="IPR008279">
    <property type="entry name" value="PEP-util_enz_mobile_dom"/>
</dbReference>
<dbReference type="InterPro" id="IPR018274">
    <property type="entry name" value="PEP_util_AS"/>
</dbReference>
<dbReference type="InterPro" id="IPR000121">
    <property type="entry name" value="PEP_util_C"/>
</dbReference>
<dbReference type="InterPro" id="IPR023151">
    <property type="entry name" value="PEP_util_CS"/>
</dbReference>
<dbReference type="InterPro" id="IPR036637">
    <property type="entry name" value="Phosphohistidine_dom_sf"/>
</dbReference>
<dbReference type="InterPro" id="IPR002192">
    <property type="entry name" value="PPDK_AMP/ATP-bd"/>
</dbReference>
<dbReference type="InterPro" id="IPR010121">
    <property type="entry name" value="Pyruvate_phosphate_dikinase"/>
</dbReference>
<dbReference type="InterPro" id="IPR015813">
    <property type="entry name" value="Pyrv/PenolPyrv_kinase-like_dom"/>
</dbReference>
<dbReference type="InterPro" id="IPR040442">
    <property type="entry name" value="Pyrv_kinase-like_dom_sf"/>
</dbReference>
<dbReference type="NCBIfam" id="NF004531">
    <property type="entry name" value="PRK05878.1"/>
    <property type="match status" value="1"/>
</dbReference>
<dbReference type="NCBIfam" id="TIGR01828">
    <property type="entry name" value="pyru_phos_dikin"/>
    <property type="match status" value="1"/>
</dbReference>
<dbReference type="PANTHER" id="PTHR22931">
    <property type="entry name" value="PHOSPHOENOLPYRUVATE DIKINASE-RELATED"/>
    <property type="match status" value="1"/>
</dbReference>
<dbReference type="PANTHER" id="PTHR22931:SF9">
    <property type="entry name" value="PYRUVATE, PHOSPHATE DIKINASE 1, CHLOROPLASTIC"/>
    <property type="match status" value="1"/>
</dbReference>
<dbReference type="Pfam" id="PF00391">
    <property type="entry name" value="PEP-utilizers"/>
    <property type="match status" value="1"/>
</dbReference>
<dbReference type="Pfam" id="PF02896">
    <property type="entry name" value="PEP-utilizers_C"/>
    <property type="match status" value="1"/>
</dbReference>
<dbReference type="Pfam" id="PF01326">
    <property type="entry name" value="PPDK_N"/>
    <property type="match status" value="3"/>
</dbReference>
<dbReference type="PIRSF" id="PIRSF000853">
    <property type="entry name" value="PPDK"/>
    <property type="match status" value="1"/>
</dbReference>
<dbReference type="SUPFAM" id="SSF56059">
    <property type="entry name" value="Glutathione synthetase ATP-binding domain-like"/>
    <property type="match status" value="1"/>
</dbReference>
<dbReference type="SUPFAM" id="SSF51621">
    <property type="entry name" value="Phosphoenolpyruvate/pyruvate domain"/>
    <property type="match status" value="1"/>
</dbReference>
<dbReference type="SUPFAM" id="SSF52009">
    <property type="entry name" value="Phosphohistidine domain"/>
    <property type="match status" value="1"/>
</dbReference>
<dbReference type="PROSITE" id="PS00742">
    <property type="entry name" value="PEP_ENZYMES_2"/>
    <property type="match status" value="1"/>
</dbReference>
<dbReference type="PROSITE" id="PS00370">
    <property type="entry name" value="PEP_ENZYMES_PHOS_SITE"/>
    <property type="match status" value="1"/>
</dbReference>
<organism>
    <name type="scientific">Flaveria pringlei</name>
    <dbReference type="NCBI Taxonomy" id="4226"/>
    <lineage>
        <taxon>Eukaryota</taxon>
        <taxon>Viridiplantae</taxon>
        <taxon>Streptophyta</taxon>
        <taxon>Embryophyta</taxon>
        <taxon>Tracheophyta</taxon>
        <taxon>Spermatophyta</taxon>
        <taxon>Magnoliopsida</taxon>
        <taxon>eudicotyledons</taxon>
        <taxon>Gunneridae</taxon>
        <taxon>Pentapetalae</taxon>
        <taxon>asterids</taxon>
        <taxon>campanulids</taxon>
        <taxon>Asterales</taxon>
        <taxon>Asteraceae</taxon>
        <taxon>Asteroideae</taxon>
        <taxon>Heliantheae alliance</taxon>
        <taxon>Tageteae</taxon>
        <taxon>Flaveria</taxon>
    </lineage>
</organism>
<feature type="transit peptide" description="Chloroplast" evidence="1">
    <location>
        <begin position="1"/>
        <end position="79"/>
    </location>
</feature>
<feature type="chain" id="PRO_0000023561" description="Pyruvate, phosphate dikinase, chloroplastic">
    <location>
        <begin position="80"/>
        <end position="956"/>
    </location>
</feature>
<feature type="active site" description="Tele-phosphohistidine intermediate" evidence="2">
    <location>
        <position position="538"/>
    </location>
</feature>
<feature type="active site" description="Proton donor" evidence="2">
    <location>
        <position position="916"/>
    </location>
</feature>
<feature type="binding site" evidence="2">
    <location>
        <position position="644"/>
    </location>
    <ligand>
        <name>substrate</name>
    </ligand>
</feature>
<feature type="binding site" evidence="2">
    <location>
        <position position="701"/>
    </location>
    <ligand>
        <name>substrate</name>
    </ligand>
</feature>
<feature type="binding site" evidence="2">
    <location>
        <position position="830"/>
    </location>
    <ligand>
        <name>Mg(2+)</name>
        <dbReference type="ChEBI" id="CHEBI:18420"/>
    </ligand>
</feature>
<feature type="binding site" evidence="2">
    <location>
        <position position="830"/>
    </location>
    <ligand>
        <name>substrate</name>
    </ligand>
</feature>
<feature type="binding site" evidence="2">
    <location>
        <position position="851"/>
    </location>
    <ligand>
        <name>substrate</name>
    </ligand>
</feature>
<feature type="binding site" evidence="2">
    <location>
        <position position="852"/>
    </location>
    <ligand>
        <name>substrate</name>
    </ligand>
</feature>
<feature type="binding site" evidence="2">
    <location>
        <position position="853"/>
    </location>
    <ligand>
        <name>substrate</name>
    </ligand>
</feature>
<feature type="binding site" evidence="2">
    <location>
        <position position="854"/>
    </location>
    <ligand>
        <name>Mg(2+)</name>
        <dbReference type="ChEBI" id="CHEBI:18420"/>
    </ligand>
</feature>
<feature type="binding site" evidence="2">
    <location>
        <position position="854"/>
    </location>
    <ligand>
        <name>substrate</name>
    </ligand>
</feature>
<feature type="modified residue" description="Phosphothreonine; by PDRP1" evidence="2">
    <location>
        <position position="536"/>
    </location>
</feature>
<feature type="strand" evidence="5">
    <location>
        <begin position="86"/>
        <end position="90"/>
    </location>
</feature>
<feature type="strand" evidence="5">
    <location>
        <begin position="93"/>
        <end position="96"/>
    </location>
</feature>
<feature type="helix" evidence="5">
    <location>
        <begin position="101"/>
        <end position="116"/>
    </location>
</feature>
<feature type="strand" evidence="5">
    <location>
        <begin position="124"/>
        <end position="127"/>
    </location>
</feature>
<feature type="helix" evidence="5">
    <location>
        <begin position="129"/>
        <end position="136"/>
    </location>
</feature>
<feature type="turn" evidence="5">
    <location>
        <begin position="137"/>
        <end position="139"/>
    </location>
</feature>
<feature type="helix" evidence="5">
    <location>
        <begin position="146"/>
        <end position="161"/>
    </location>
</feature>
<feature type="strand" evidence="5">
    <location>
        <begin position="168"/>
        <end position="171"/>
    </location>
</feature>
<feature type="strand" evidence="5">
    <location>
        <begin position="174"/>
        <end position="179"/>
    </location>
</feature>
<feature type="strand" evidence="5">
    <location>
        <begin position="191"/>
        <end position="194"/>
    </location>
</feature>
<feature type="helix" evidence="5">
    <location>
        <begin position="198"/>
        <end position="205"/>
    </location>
</feature>
<feature type="helix" evidence="5">
    <location>
        <begin position="210"/>
        <end position="227"/>
    </location>
</feature>
<feature type="helix" evidence="5">
    <location>
        <begin position="233"/>
        <end position="247"/>
    </location>
</feature>
<feature type="helix" evidence="5">
    <location>
        <begin position="252"/>
        <end position="254"/>
    </location>
</feature>
<feature type="helix" evidence="5">
    <location>
        <begin position="257"/>
        <end position="275"/>
    </location>
</feature>
<feature type="helix" evidence="5">
    <location>
        <begin position="283"/>
        <end position="298"/>
    </location>
</feature>
<feature type="helix" evidence="5">
    <location>
        <begin position="301"/>
        <end position="309"/>
    </location>
</feature>
<feature type="strand" evidence="5">
    <location>
        <begin position="319"/>
        <end position="324"/>
    </location>
</feature>
<feature type="strand" evidence="5">
    <location>
        <begin position="335"/>
        <end position="342"/>
    </location>
</feature>
<feature type="turn" evidence="5">
    <location>
        <begin position="344"/>
        <end position="346"/>
    </location>
</feature>
<feature type="strand" evidence="5">
    <location>
        <begin position="352"/>
        <end position="358"/>
    </location>
</feature>
<feature type="helix" evidence="5">
    <location>
        <begin position="361"/>
        <end position="366"/>
    </location>
</feature>
<feature type="strand" evidence="5">
    <location>
        <begin position="367"/>
        <end position="369"/>
    </location>
</feature>
<feature type="helix" evidence="5">
    <location>
        <begin position="374"/>
        <end position="380"/>
    </location>
</feature>
<feature type="helix" evidence="5">
    <location>
        <begin position="382"/>
        <end position="399"/>
    </location>
</feature>
<feature type="strand" evidence="5">
    <location>
        <begin position="403"/>
        <end position="410"/>
    </location>
</feature>
<feature type="strand" evidence="5">
    <location>
        <begin position="413"/>
        <end position="421"/>
    </location>
</feature>
<feature type="helix" evidence="5">
    <location>
        <begin position="426"/>
        <end position="438"/>
    </location>
</feature>
<feature type="helix" evidence="5">
    <location>
        <begin position="444"/>
        <end position="448"/>
    </location>
</feature>
<feature type="helix" evidence="5">
    <location>
        <begin position="453"/>
        <end position="459"/>
    </location>
</feature>
<feature type="strand" evidence="5">
    <location>
        <begin position="463"/>
        <end position="465"/>
    </location>
</feature>
<feature type="turn" evidence="5">
    <location>
        <begin position="467"/>
        <end position="470"/>
    </location>
</feature>
<feature type="helix" evidence="5">
    <location>
        <begin position="471"/>
        <end position="473"/>
    </location>
</feature>
<feature type="strand" evidence="5">
    <location>
        <begin position="474"/>
        <end position="477"/>
    </location>
</feature>
<feature type="strand" evidence="5">
    <location>
        <begin position="479"/>
        <end position="482"/>
    </location>
</feature>
<feature type="strand" evidence="5">
    <location>
        <begin position="485"/>
        <end position="493"/>
    </location>
</feature>
<feature type="helix" evidence="5">
    <location>
        <begin position="494"/>
        <end position="502"/>
    </location>
</feature>
<feature type="strand" evidence="5">
    <location>
        <begin position="507"/>
        <end position="513"/>
    </location>
</feature>
<feature type="helix" evidence="5">
    <location>
        <begin position="516"/>
        <end position="518"/>
    </location>
</feature>
<feature type="helix" evidence="5">
    <location>
        <begin position="519"/>
        <end position="522"/>
    </location>
</feature>
<feature type="strand" evidence="5">
    <location>
        <begin position="526"/>
        <end position="532"/>
    </location>
</feature>
<feature type="helix" evidence="5">
    <location>
        <begin position="538"/>
        <end position="546"/>
    </location>
</feature>
<feature type="strand" evidence="5">
    <location>
        <begin position="549"/>
        <end position="552"/>
    </location>
</feature>
<feature type="turn" evidence="5">
    <location>
        <begin position="561"/>
        <end position="564"/>
    </location>
</feature>
<feature type="strand" evidence="5">
    <location>
        <begin position="565"/>
        <end position="567"/>
    </location>
</feature>
<feature type="strand" evidence="5">
    <location>
        <begin position="572"/>
        <end position="574"/>
    </location>
</feature>
<feature type="strand" evidence="5">
    <location>
        <begin position="578"/>
        <end position="582"/>
    </location>
</feature>
<feature type="turn" evidence="5">
    <location>
        <begin position="583"/>
        <end position="586"/>
    </location>
</feature>
<feature type="strand" evidence="5">
    <location>
        <begin position="587"/>
        <end position="591"/>
    </location>
</feature>
<feature type="helix" evidence="5">
    <location>
        <begin position="602"/>
        <end position="614"/>
    </location>
</feature>
<feature type="strand" evidence="5">
    <location>
        <begin position="617"/>
        <end position="622"/>
    </location>
</feature>
<feature type="helix" evidence="5">
    <location>
        <begin position="626"/>
        <end position="634"/>
    </location>
</feature>
<feature type="strand" evidence="5">
    <location>
        <begin position="639"/>
        <end position="644"/>
    </location>
</feature>
<feature type="helix" evidence="5">
    <location>
        <begin position="645"/>
        <end position="647"/>
    </location>
</feature>
<feature type="helix" evidence="5">
    <location>
        <begin position="653"/>
        <end position="663"/>
    </location>
</feature>
<feature type="helix" evidence="5">
    <location>
        <begin position="668"/>
        <end position="692"/>
    </location>
</feature>
<feature type="turn" evidence="5">
    <location>
        <begin position="693"/>
        <end position="695"/>
    </location>
</feature>
<feature type="strand" evidence="5">
    <location>
        <begin position="696"/>
        <end position="701"/>
    </location>
</feature>
<feature type="helix" evidence="5">
    <location>
        <begin position="707"/>
        <end position="710"/>
    </location>
</feature>
<feature type="helix" evidence="5">
    <location>
        <begin position="716"/>
        <end position="727"/>
    </location>
</feature>
<feature type="helix" evidence="5">
    <location>
        <begin position="731"/>
        <end position="741"/>
    </location>
</feature>
<feature type="helix" evidence="5">
    <location>
        <begin position="746"/>
        <end position="748"/>
    </location>
</feature>
<feature type="helix" evidence="5">
    <location>
        <begin position="753"/>
        <end position="758"/>
    </location>
</feature>
<feature type="helix" evidence="5">
    <location>
        <begin position="760"/>
        <end position="779"/>
    </location>
</feature>
<feature type="strand" evidence="5">
    <location>
        <begin position="785"/>
        <end position="790"/>
    </location>
</feature>
<feature type="helix" evidence="5">
    <location>
        <begin position="796"/>
        <end position="817"/>
    </location>
</feature>
<feature type="strand" evidence="5">
    <location>
        <begin position="824"/>
        <end position="829"/>
    </location>
</feature>
<feature type="helix" evidence="5">
    <location>
        <begin position="832"/>
        <end position="836"/>
    </location>
</feature>
<feature type="helix" evidence="5">
    <location>
        <begin position="838"/>
        <end position="842"/>
    </location>
</feature>
<feature type="strand" evidence="5">
    <location>
        <begin position="846"/>
        <end position="850"/>
    </location>
</feature>
<feature type="helix" evidence="5">
    <location>
        <begin position="852"/>
        <end position="860"/>
    </location>
</feature>
<feature type="turn" evidence="5">
    <location>
        <begin position="864"/>
        <end position="866"/>
    </location>
</feature>
<feature type="helix" evidence="5">
    <location>
        <begin position="867"/>
        <end position="869"/>
    </location>
</feature>
<feature type="helix" evidence="5">
    <location>
        <begin position="871"/>
        <end position="876"/>
    </location>
</feature>
<feature type="turn" evidence="5">
    <location>
        <begin position="884"/>
        <end position="886"/>
    </location>
</feature>
<feature type="turn" evidence="5">
    <location>
        <begin position="890"/>
        <end position="892"/>
    </location>
</feature>
<feature type="helix" evidence="5">
    <location>
        <begin position="893"/>
        <end position="907"/>
    </location>
</feature>
<feature type="strand" evidence="5">
    <location>
        <begin position="912"/>
        <end position="915"/>
    </location>
</feature>
<feature type="helix" evidence="5">
    <location>
        <begin position="918"/>
        <end position="921"/>
    </location>
</feature>
<feature type="helix" evidence="5">
    <location>
        <begin position="923"/>
        <end position="931"/>
    </location>
</feature>
<feature type="strand" evidence="5">
    <location>
        <begin position="935"/>
        <end position="939"/>
    </location>
</feature>
<feature type="helix" evidence="5">
    <location>
        <begin position="941"/>
        <end position="943"/>
    </location>
</feature>
<feature type="helix" evidence="5">
    <location>
        <begin position="944"/>
        <end position="953"/>
    </location>
</feature>
<accession>Q42736</accession>